<feature type="chain" id="PRO_1000016270" description="ATP phosphoribosyltransferase regulatory subunit">
    <location>
        <begin position="1"/>
        <end position="387"/>
    </location>
</feature>
<sequence length="387" mass="42021">MRNWLLPEYIEDVLPAEAARVEQLRRSLLDLFKVHGYLYVIPPMMEYMESLTTGIGHDLDIATFKVVDQLTGKLMGIRADITPQTARIDAHMLNNQGVTRLCYAGSVLRTSPDGLARSREPLHVGAELYGHAGVESDIEIQRLMIKALHTVGLDTLYIDVSHVGIFASLLEHAGIGEAQEQELYAALQSKDQAAVRALGRGLNPDTLEALSSLTELSGDISVLEQAAKRLPQTEKIQQALRDLKAVGAGLDDLDVKVCFDLAELRGYHYHSGIVFAAYAQGYAGPLARGGRYDEVGAIFGRARPATGFSLDLRGVVSSLPVAETVGAIFAPAIADDALIFVVESLRAQGQVVIQDLPGQEPYRAELGCDRILVQQNGEWVVVAAPEL</sequence>
<proteinExistence type="inferred from homology"/>
<comment type="function">
    <text evidence="1">Required for the first step of histidine biosynthesis. May allow the feedback regulation of ATP phosphoribosyltransferase activity by histidine.</text>
</comment>
<comment type="pathway">
    <text evidence="1">Amino-acid biosynthesis; L-histidine biosynthesis; L-histidine from 5-phospho-alpha-D-ribose 1-diphosphate: step 1/9.</text>
</comment>
<comment type="subunit">
    <text evidence="1">Heteromultimer composed of HisG and HisZ subunits.</text>
</comment>
<comment type="subcellular location">
    <subcellularLocation>
        <location evidence="1">Cytoplasm</location>
    </subcellularLocation>
</comment>
<comment type="miscellaneous">
    <text>This function is generally fulfilled by the C-terminal part of HisG, which is missing in some bacteria such as this one.</text>
</comment>
<comment type="similarity">
    <text evidence="1">Belongs to the class-II aminoacyl-tRNA synthetase family. HisZ subfamily.</text>
</comment>
<gene>
    <name evidence="1" type="primary">hisZ</name>
    <name type="ordered locus">Mfla_1584</name>
</gene>
<organism>
    <name type="scientific">Methylobacillus flagellatus (strain ATCC 51484 / DSM 6875 / VKM B-1610 / KT)</name>
    <dbReference type="NCBI Taxonomy" id="265072"/>
    <lineage>
        <taxon>Bacteria</taxon>
        <taxon>Pseudomonadati</taxon>
        <taxon>Pseudomonadota</taxon>
        <taxon>Betaproteobacteria</taxon>
        <taxon>Nitrosomonadales</taxon>
        <taxon>Methylophilaceae</taxon>
        <taxon>Methylobacillus</taxon>
    </lineage>
</organism>
<accession>Q1H0Y5</accession>
<name>HISZ_METFK</name>
<protein>
    <recommendedName>
        <fullName evidence="1">ATP phosphoribosyltransferase regulatory subunit</fullName>
    </recommendedName>
</protein>
<keyword id="KW-0028">Amino-acid biosynthesis</keyword>
<keyword id="KW-0963">Cytoplasm</keyword>
<keyword id="KW-0368">Histidine biosynthesis</keyword>
<keyword id="KW-1185">Reference proteome</keyword>
<dbReference type="EMBL" id="CP000284">
    <property type="protein sequence ID" value="ABE49852.1"/>
    <property type="molecule type" value="Genomic_DNA"/>
</dbReference>
<dbReference type="RefSeq" id="WP_011479806.1">
    <property type="nucleotide sequence ID" value="NC_007947.1"/>
</dbReference>
<dbReference type="SMR" id="Q1H0Y5"/>
<dbReference type="STRING" id="265072.Mfla_1584"/>
<dbReference type="KEGG" id="mfa:Mfla_1584"/>
<dbReference type="eggNOG" id="COG3705">
    <property type="taxonomic scope" value="Bacteria"/>
</dbReference>
<dbReference type="HOGENOM" id="CLU_025113_0_1_4"/>
<dbReference type="OrthoDB" id="9769617at2"/>
<dbReference type="UniPathway" id="UPA00031">
    <property type="reaction ID" value="UER00006"/>
</dbReference>
<dbReference type="Proteomes" id="UP000002440">
    <property type="component" value="Chromosome"/>
</dbReference>
<dbReference type="GO" id="GO:0005737">
    <property type="term" value="C:cytoplasm"/>
    <property type="evidence" value="ECO:0007669"/>
    <property type="project" value="UniProtKB-SubCell"/>
</dbReference>
<dbReference type="GO" id="GO:0000105">
    <property type="term" value="P:L-histidine biosynthetic process"/>
    <property type="evidence" value="ECO:0007669"/>
    <property type="project" value="UniProtKB-UniRule"/>
</dbReference>
<dbReference type="CDD" id="cd00773">
    <property type="entry name" value="HisRS-like_core"/>
    <property type="match status" value="1"/>
</dbReference>
<dbReference type="Gene3D" id="3.30.930.10">
    <property type="entry name" value="Bira Bifunctional Protein, Domain 2"/>
    <property type="match status" value="1"/>
</dbReference>
<dbReference type="HAMAP" id="MF_00125">
    <property type="entry name" value="HisZ"/>
    <property type="match status" value="1"/>
</dbReference>
<dbReference type="InterPro" id="IPR045864">
    <property type="entry name" value="aa-tRNA-synth_II/BPL/LPL"/>
</dbReference>
<dbReference type="InterPro" id="IPR041715">
    <property type="entry name" value="HisRS-like_core"/>
</dbReference>
<dbReference type="InterPro" id="IPR004516">
    <property type="entry name" value="HisRS/HisZ"/>
</dbReference>
<dbReference type="InterPro" id="IPR004517">
    <property type="entry name" value="HisZ"/>
</dbReference>
<dbReference type="NCBIfam" id="TIGR00443">
    <property type="entry name" value="hisZ_biosyn_reg"/>
    <property type="match status" value="1"/>
</dbReference>
<dbReference type="NCBIfam" id="NF008935">
    <property type="entry name" value="PRK12292.1-1"/>
    <property type="match status" value="1"/>
</dbReference>
<dbReference type="NCBIfam" id="NF009086">
    <property type="entry name" value="PRK12421.1"/>
    <property type="match status" value="1"/>
</dbReference>
<dbReference type="PANTHER" id="PTHR11476:SF7">
    <property type="entry name" value="HISTIDINE--TRNA LIGASE"/>
    <property type="match status" value="1"/>
</dbReference>
<dbReference type="PANTHER" id="PTHR11476">
    <property type="entry name" value="HISTIDYL-TRNA SYNTHETASE"/>
    <property type="match status" value="1"/>
</dbReference>
<dbReference type="Pfam" id="PF13393">
    <property type="entry name" value="tRNA-synt_His"/>
    <property type="match status" value="1"/>
</dbReference>
<dbReference type="PIRSF" id="PIRSF001549">
    <property type="entry name" value="His-tRNA_synth"/>
    <property type="match status" value="1"/>
</dbReference>
<dbReference type="SUPFAM" id="SSF55681">
    <property type="entry name" value="Class II aaRS and biotin synthetases"/>
    <property type="match status" value="1"/>
</dbReference>
<reference key="1">
    <citation type="submission" date="2006-03" db="EMBL/GenBank/DDBJ databases">
        <title>Complete sequence of Methylobacillus flagellatus KT.</title>
        <authorList>
            <consortium name="US DOE Joint Genome Institute"/>
            <person name="Copeland A."/>
            <person name="Lucas S."/>
            <person name="Lapidus A."/>
            <person name="Barry K."/>
            <person name="Detter J.C."/>
            <person name="Glavina del Rio T."/>
            <person name="Hammon N."/>
            <person name="Israni S."/>
            <person name="Dalin E."/>
            <person name="Tice H."/>
            <person name="Pitluck S."/>
            <person name="Brettin T."/>
            <person name="Bruce D."/>
            <person name="Han C."/>
            <person name="Tapia R."/>
            <person name="Saunders E."/>
            <person name="Gilna P."/>
            <person name="Schmutz J."/>
            <person name="Larimer F."/>
            <person name="Land M."/>
            <person name="Kyrpides N."/>
            <person name="Anderson I."/>
            <person name="Richardson P."/>
        </authorList>
    </citation>
    <scope>NUCLEOTIDE SEQUENCE [LARGE SCALE GENOMIC DNA]</scope>
    <source>
        <strain>ATCC 51484 / DSM 6875 / VKM B-1610 / KT</strain>
    </source>
</reference>
<evidence type="ECO:0000255" key="1">
    <source>
        <dbReference type="HAMAP-Rule" id="MF_00125"/>
    </source>
</evidence>